<evidence type="ECO:0000255" key="1">
    <source>
        <dbReference type="HAMAP-Rule" id="MF_00083"/>
    </source>
</evidence>
<comment type="function">
    <text evidence="1">Hydrolyzes ribosome-free peptidyl-tRNAs (with 1 or more amino acids incorporated), which drop off the ribosome during protein synthesis, or as a result of ribosome stalling.</text>
</comment>
<comment type="function">
    <text evidence="1">Catalyzes the release of premature peptidyl moieties from peptidyl-tRNA molecules trapped in stalled 50S ribosomal subunits, and thus maintains levels of free tRNAs and 50S ribosomes.</text>
</comment>
<comment type="catalytic activity">
    <reaction evidence="1">
        <text>an N-acyl-L-alpha-aminoacyl-tRNA + H2O = an N-acyl-L-amino acid + a tRNA + H(+)</text>
        <dbReference type="Rhea" id="RHEA:54448"/>
        <dbReference type="Rhea" id="RHEA-COMP:10123"/>
        <dbReference type="Rhea" id="RHEA-COMP:13883"/>
        <dbReference type="ChEBI" id="CHEBI:15377"/>
        <dbReference type="ChEBI" id="CHEBI:15378"/>
        <dbReference type="ChEBI" id="CHEBI:59874"/>
        <dbReference type="ChEBI" id="CHEBI:78442"/>
        <dbReference type="ChEBI" id="CHEBI:138191"/>
        <dbReference type="EC" id="3.1.1.29"/>
    </reaction>
</comment>
<comment type="subunit">
    <text evidence="1">Monomer.</text>
</comment>
<comment type="subcellular location">
    <subcellularLocation>
        <location evidence="1">Cytoplasm</location>
    </subcellularLocation>
</comment>
<comment type="similarity">
    <text evidence="1">Belongs to the PTH family.</text>
</comment>
<gene>
    <name evidence="1" type="primary">pth</name>
    <name type="ordered locus">A2cp1_0137</name>
</gene>
<sequence>MKLVVGLGNPGEEYARTRHNVGFVVADRLAQLAGASFSAKKFAAELAEARLGPERVWIMKPQTYMNHSGEAVGAALRFWKLGLDDLVVVHDDLELDPYRVQLKVGGGHGGHNGVKSVNAHVGSPEYARVRVGVGRPPPRMDPADYVLGKFAKGEDAELDLCVEQAVEATRLAVELGAARAMNQVNRRSRAAD</sequence>
<accession>B8J804</accession>
<protein>
    <recommendedName>
        <fullName evidence="1">Peptidyl-tRNA hydrolase</fullName>
        <shortName evidence="1">Pth</shortName>
        <ecNumber evidence="1">3.1.1.29</ecNumber>
    </recommendedName>
</protein>
<reference key="1">
    <citation type="submission" date="2009-01" db="EMBL/GenBank/DDBJ databases">
        <title>Complete sequence of Anaeromyxobacter dehalogenans 2CP-1.</title>
        <authorList>
            <person name="Lucas S."/>
            <person name="Copeland A."/>
            <person name="Lapidus A."/>
            <person name="Glavina del Rio T."/>
            <person name="Dalin E."/>
            <person name="Tice H."/>
            <person name="Bruce D."/>
            <person name="Goodwin L."/>
            <person name="Pitluck S."/>
            <person name="Saunders E."/>
            <person name="Brettin T."/>
            <person name="Detter J.C."/>
            <person name="Han C."/>
            <person name="Larimer F."/>
            <person name="Land M."/>
            <person name="Hauser L."/>
            <person name="Kyrpides N."/>
            <person name="Ovchinnikova G."/>
            <person name="Beliaev A.S."/>
            <person name="Richardson P."/>
        </authorList>
    </citation>
    <scope>NUCLEOTIDE SEQUENCE [LARGE SCALE GENOMIC DNA]</scope>
    <source>
        <strain>2CP-1 / ATCC BAA-258</strain>
    </source>
</reference>
<name>PTH_ANAD2</name>
<dbReference type="EC" id="3.1.1.29" evidence="1"/>
<dbReference type="EMBL" id="CP001359">
    <property type="protein sequence ID" value="ACL63496.1"/>
    <property type="molecule type" value="Genomic_DNA"/>
</dbReference>
<dbReference type="RefSeq" id="WP_012631580.1">
    <property type="nucleotide sequence ID" value="NC_011891.1"/>
</dbReference>
<dbReference type="SMR" id="B8J804"/>
<dbReference type="KEGG" id="acp:A2cp1_0137"/>
<dbReference type="HOGENOM" id="CLU_062456_2_2_7"/>
<dbReference type="Proteomes" id="UP000007089">
    <property type="component" value="Chromosome"/>
</dbReference>
<dbReference type="GO" id="GO:0005737">
    <property type="term" value="C:cytoplasm"/>
    <property type="evidence" value="ECO:0007669"/>
    <property type="project" value="UniProtKB-SubCell"/>
</dbReference>
<dbReference type="GO" id="GO:0004045">
    <property type="term" value="F:peptidyl-tRNA hydrolase activity"/>
    <property type="evidence" value="ECO:0007669"/>
    <property type="project" value="UniProtKB-UniRule"/>
</dbReference>
<dbReference type="GO" id="GO:0000049">
    <property type="term" value="F:tRNA binding"/>
    <property type="evidence" value="ECO:0007669"/>
    <property type="project" value="UniProtKB-UniRule"/>
</dbReference>
<dbReference type="GO" id="GO:0006515">
    <property type="term" value="P:protein quality control for misfolded or incompletely synthesized proteins"/>
    <property type="evidence" value="ECO:0007669"/>
    <property type="project" value="UniProtKB-UniRule"/>
</dbReference>
<dbReference type="GO" id="GO:0072344">
    <property type="term" value="P:rescue of stalled ribosome"/>
    <property type="evidence" value="ECO:0007669"/>
    <property type="project" value="UniProtKB-UniRule"/>
</dbReference>
<dbReference type="CDD" id="cd00462">
    <property type="entry name" value="PTH"/>
    <property type="match status" value="1"/>
</dbReference>
<dbReference type="FunFam" id="3.40.50.1470:FF:000001">
    <property type="entry name" value="Peptidyl-tRNA hydrolase"/>
    <property type="match status" value="1"/>
</dbReference>
<dbReference type="Gene3D" id="3.40.50.1470">
    <property type="entry name" value="Peptidyl-tRNA hydrolase"/>
    <property type="match status" value="1"/>
</dbReference>
<dbReference type="HAMAP" id="MF_00083">
    <property type="entry name" value="Pept_tRNA_hydro_bact"/>
    <property type="match status" value="1"/>
</dbReference>
<dbReference type="InterPro" id="IPR001328">
    <property type="entry name" value="Pept_tRNA_hydro"/>
</dbReference>
<dbReference type="InterPro" id="IPR018171">
    <property type="entry name" value="Pept_tRNA_hydro_CS"/>
</dbReference>
<dbReference type="InterPro" id="IPR036416">
    <property type="entry name" value="Pept_tRNA_hydro_sf"/>
</dbReference>
<dbReference type="NCBIfam" id="TIGR00447">
    <property type="entry name" value="pth"/>
    <property type="match status" value="1"/>
</dbReference>
<dbReference type="PANTHER" id="PTHR17224">
    <property type="entry name" value="PEPTIDYL-TRNA HYDROLASE"/>
    <property type="match status" value="1"/>
</dbReference>
<dbReference type="PANTHER" id="PTHR17224:SF1">
    <property type="entry name" value="PEPTIDYL-TRNA HYDROLASE"/>
    <property type="match status" value="1"/>
</dbReference>
<dbReference type="Pfam" id="PF01195">
    <property type="entry name" value="Pept_tRNA_hydro"/>
    <property type="match status" value="1"/>
</dbReference>
<dbReference type="SUPFAM" id="SSF53178">
    <property type="entry name" value="Peptidyl-tRNA hydrolase-like"/>
    <property type="match status" value="1"/>
</dbReference>
<dbReference type="PROSITE" id="PS01195">
    <property type="entry name" value="PEPT_TRNA_HYDROL_1"/>
    <property type="match status" value="1"/>
</dbReference>
<dbReference type="PROSITE" id="PS01196">
    <property type="entry name" value="PEPT_TRNA_HYDROL_2"/>
    <property type="match status" value="1"/>
</dbReference>
<proteinExistence type="inferred from homology"/>
<organism>
    <name type="scientific">Anaeromyxobacter dehalogenans (strain 2CP-1 / ATCC BAA-258)</name>
    <dbReference type="NCBI Taxonomy" id="455488"/>
    <lineage>
        <taxon>Bacteria</taxon>
        <taxon>Pseudomonadati</taxon>
        <taxon>Myxococcota</taxon>
        <taxon>Myxococcia</taxon>
        <taxon>Myxococcales</taxon>
        <taxon>Cystobacterineae</taxon>
        <taxon>Anaeromyxobacteraceae</taxon>
        <taxon>Anaeromyxobacter</taxon>
    </lineage>
</organism>
<keyword id="KW-0963">Cytoplasm</keyword>
<keyword id="KW-0378">Hydrolase</keyword>
<keyword id="KW-0694">RNA-binding</keyword>
<keyword id="KW-0820">tRNA-binding</keyword>
<feature type="chain" id="PRO_1000192955" description="Peptidyl-tRNA hydrolase">
    <location>
        <begin position="1"/>
        <end position="192"/>
    </location>
</feature>
<feature type="active site" description="Proton acceptor" evidence="1">
    <location>
        <position position="19"/>
    </location>
</feature>
<feature type="binding site" evidence="1">
    <location>
        <position position="14"/>
    </location>
    <ligand>
        <name>tRNA</name>
        <dbReference type="ChEBI" id="CHEBI:17843"/>
    </ligand>
</feature>
<feature type="binding site" evidence="1">
    <location>
        <position position="64"/>
    </location>
    <ligand>
        <name>tRNA</name>
        <dbReference type="ChEBI" id="CHEBI:17843"/>
    </ligand>
</feature>
<feature type="binding site" evidence="1">
    <location>
        <position position="66"/>
    </location>
    <ligand>
        <name>tRNA</name>
        <dbReference type="ChEBI" id="CHEBI:17843"/>
    </ligand>
</feature>
<feature type="binding site" evidence="1">
    <location>
        <position position="112"/>
    </location>
    <ligand>
        <name>tRNA</name>
        <dbReference type="ChEBI" id="CHEBI:17843"/>
    </ligand>
</feature>
<feature type="site" description="Discriminates between blocked and unblocked aminoacyl-tRNA" evidence="1">
    <location>
        <position position="9"/>
    </location>
</feature>
<feature type="site" description="Stabilizes the basic form of H active site to accept a proton" evidence="1">
    <location>
        <position position="91"/>
    </location>
</feature>